<proteinExistence type="inferred from homology"/>
<evidence type="ECO:0000250" key="1"/>
<evidence type="ECO:0000250" key="2">
    <source>
        <dbReference type="UniProtKB" id="P00157"/>
    </source>
</evidence>
<evidence type="ECO:0000255" key="3">
    <source>
        <dbReference type="PROSITE-ProRule" id="PRU00967"/>
    </source>
</evidence>
<evidence type="ECO:0000255" key="4">
    <source>
        <dbReference type="PROSITE-ProRule" id="PRU00968"/>
    </source>
</evidence>
<evidence type="ECO:0000305" key="5"/>
<feature type="chain" id="PRO_0000061430" description="Cytochrome b">
    <location>
        <begin position="1" status="less than"/>
        <end position="308" status="greater than"/>
    </location>
</feature>
<feature type="transmembrane region" description="Helical" evidence="2">
    <location>
        <begin position="1"/>
        <end position="21"/>
    </location>
</feature>
<feature type="transmembrane region" description="Helical" evidence="2">
    <location>
        <begin position="45"/>
        <end position="66"/>
    </location>
</feature>
<feature type="transmembrane region" description="Helical" evidence="2">
    <location>
        <begin position="81"/>
        <end position="101"/>
    </location>
</feature>
<feature type="transmembrane region" description="Helical" evidence="2">
    <location>
        <begin position="146"/>
        <end position="166"/>
    </location>
</feature>
<feature type="transmembrane region" description="Helical" evidence="2">
    <location>
        <begin position="194"/>
        <end position="214"/>
    </location>
</feature>
<feature type="transmembrane region" description="Helical" evidence="2">
    <location>
        <begin position="256"/>
        <end position="276"/>
    </location>
</feature>
<feature type="transmembrane region" description="Helical" evidence="2">
    <location>
        <begin position="288"/>
        <end position="308"/>
    </location>
</feature>
<feature type="binding site" description="axial binding residue" evidence="2">
    <location>
        <position position="51"/>
    </location>
    <ligand>
        <name>heme b</name>
        <dbReference type="ChEBI" id="CHEBI:60344"/>
        <label>b562</label>
    </ligand>
    <ligandPart>
        <name>Fe</name>
        <dbReference type="ChEBI" id="CHEBI:18248"/>
    </ligandPart>
</feature>
<feature type="binding site" description="axial binding residue" evidence="2">
    <location>
        <position position="65"/>
    </location>
    <ligand>
        <name>heme b</name>
        <dbReference type="ChEBI" id="CHEBI:60344"/>
        <label>b566</label>
    </ligand>
    <ligandPart>
        <name>Fe</name>
        <dbReference type="ChEBI" id="CHEBI:18248"/>
    </ligandPart>
</feature>
<feature type="binding site" description="axial binding residue" evidence="2">
    <location>
        <position position="150"/>
    </location>
    <ligand>
        <name>heme b</name>
        <dbReference type="ChEBI" id="CHEBI:60344"/>
        <label>b562</label>
    </ligand>
    <ligandPart>
        <name>Fe</name>
        <dbReference type="ChEBI" id="CHEBI:18248"/>
    </ligandPart>
</feature>
<feature type="binding site" description="axial binding residue" evidence="2">
    <location>
        <position position="164"/>
    </location>
    <ligand>
        <name>heme b</name>
        <dbReference type="ChEBI" id="CHEBI:60344"/>
        <label>b566</label>
    </ligand>
    <ligandPart>
        <name>Fe</name>
        <dbReference type="ChEBI" id="CHEBI:18248"/>
    </ligandPart>
</feature>
<feature type="binding site" evidence="2">
    <location>
        <position position="169"/>
    </location>
    <ligand>
        <name>a ubiquinone</name>
        <dbReference type="ChEBI" id="CHEBI:16389"/>
    </ligand>
</feature>
<feature type="sequence conflict" description="In Ref. 3; AAA32139." evidence="5" ref="3">
    <original>G</original>
    <variation>A</variation>
    <location>
        <position position="16"/>
    </location>
</feature>
<feature type="non-terminal residue">
    <location>
        <position position="1"/>
    </location>
</feature>
<feature type="non-terminal residue">
    <location>
        <position position="308"/>
    </location>
</feature>
<keyword id="KW-0249">Electron transport</keyword>
<keyword id="KW-0349">Heme</keyword>
<keyword id="KW-0408">Iron</keyword>
<keyword id="KW-0472">Membrane</keyword>
<keyword id="KW-0479">Metal-binding</keyword>
<keyword id="KW-0496">Mitochondrion</keyword>
<keyword id="KW-0999">Mitochondrion inner membrane</keyword>
<keyword id="KW-0679">Respiratory chain</keyword>
<keyword id="KW-0812">Transmembrane</keyword>
<keyword id="KW-1133">Transmembrane helix</keyword>
<keyword id="KW-0813">Transport</keyword>
<keyword id="KW-0830">Ubiquinone</keyword>
<name>CYB_POMTE</name>
<comment type="function">
    <text evidence="2">Component of the ubiquinol-cytochrome c reductase complex (complex III or cytochrome b-c1 complex) that is part of the mitochondrial respiratory chain. The b-c1 complex mediates electron transfer from ubiquinol to cytochrome c. Contributes to the generation of a proton gradient across the mitochondrial membrane that is then used for ATP synthesis.</text>
</comment>
<comment type="cofactor">
    <cofactor evidence="2">
        <name>heme b</name>
        <dbReference type="ChEBI" id="CHEBI:60344"/>
    </cofactor>
    <text evidence="2">Binds 2 heme b groups non-covalently.</text>
</comment>
<comment type="subunit">
    <text evidence="2">The cytochrome bc1 complex contains 11 subunits: 3 respiratory subunits (MT-CYB, CYC1 and UQCRFS1), 2 core proteins (UQCRC1 and UQCRC2) and 6 low-molecular weight proteins (UQCRH/QCR6, UQCRB/QCR7, UQCRQ/QCR8, UQCR10/QCR9, UQCR11/QCR10 and a cleavage product of UQCRFS1). This cytochrome bc1 complex then forms a dimer.</text>
</comment>
<comment type="subcellular location">
    <subcellularLocation>
        <location evidence="2">Mitochondrion inner membrane</location>
        <topology evidence="2">Multi-pass membrane protein</topology>
    </subcellularLocation>
</comment>
<comment type="miscellaneous">
    <text evidence="1">Heme 1 (or BL or b562) is low-potential and absorbs at about 562 nm, and heme 2 (or BH or b566) is high-potential and absorbs at about 566 nm.</text>
</comment>
<comment type="similarity">
    <text evidence="3 4">Belongs to the cytochrome b family.</text>
</comment>
<comment type="caution">
    <text evidence="2">The full-length protein contains only eight transmembrane helices, not nine as predicted by bioinformatics tools.</text>
</comment>
<reference key="1">
    <citation type="journal article" date="1991" name="Proc. R. Soc. B">
        <title>Mitochondrial resolution of a deep branch in the genealogical tree for perching birds.</title>
        <authorList>
            <person name="Edwards S.V."/>
            <person name="Arctander P."/>
            <person name="Wilson A.C."/>
        </authorList>
    </citation>
    <scope>NUCLEOTIDE SEQUENCE [GENOMIC DNA]</scope>
</reference>
<reference key="2">
    <citation type="journal article" date="1996" name="Proc. R. Soc. B">
        <authorList>
            <person name="Edwards S.V."/>
            <person name="Arctander P."/>
        </authorList>
    </citation>
    <scope>ERRATUM OF PUBMED:1676522</scope>
</reference>
<reference key="3">
    <citation type="journal article" date="1990" name="Genetics">
        <title>Phylogenetically informative length polymorphism and sequence variability in mitochondrial DNA of Australian songbirds (Pomatostomus).</title>
        <authorList>
            <person name="Edwards S.V."/>
            <person name="Wilson A.C."/>
        </authorList>
    </citation>
    <scope>NUCLEOTIDE SEQUENCE [GENOMIC DNA] OF 5-98</scope>
    <source>
        <tissue>Liver</tissue>
    </source>
</reference>
<reference key="4">
    <citation type="journal article" date="1989" name="Proc. Natl. Acad. Sci. U.S.A.">
        <title>Dynamics of mitochondrial DNA evolution in animals: amplification and sequencing with conserved primers.</title>
        <authorList>
            <person name="Kocher T.D."/>
            <person name="Thomas W.K."/>
            <person name="Meyer A."/>
            <person name="Edwards S.V."/>
            <person name="Paeaebo S."/>
            <person name="Villablanca F.X."/>
            <person name="Wilson A.C."/>
        </authorList>
    </citation>
    <scope>NUCLEOTIDE SEQUENCE [GENOMIC DNA] OF 15-93</scope>
</reference>
<organism>
    <name type="scientific">Pomatostomus temporalis</name>
    <name type="common">Grey-crowned babbler</name>
    <name type="synonym">Pomatorhinus temporalis</name>
    <dbReference type="NCBI Taxonomy" id="9178"/>
    <lineage>
        <taxon>Eukaryota</taxon>
        <taxon>Metazoa</taxon>
        <taxon>Chordata</taxon>
        <taxon>Craniata</taxon>
        <taxon>Vertebrata</taxon>
        <taxon>Euteleostomi</taxon>
        <taxon>Archelosauria</taxon>
        <taxon>Archosauria</taxon>
        <taxon>Dinosauria</taxon>
        <taxon>Saurischia</taxon>
        <taxon>Theropoda</taxon>
        <taxon>Coelurosauria</taxon>
        <taxon>Aves</taxon>
        <taxon>Neognathae</taxon>
        <taxon>Neoaves</taxon>
        <taxon>Telluraves</taxon>
        <taxon>Australaves</taxon>
        <taxon>Passeriformes</taxon>
        <taxon>Sylvioidea</taxon>
        <taxon>Timaliidae</taxon>
        <taxon>Pomatostomus</taxon>
    </lineage>
</organism>
<geneLocation type="mitochondrion"/>
<accession>P29631</accession>
<accession>P16361</accession>
<protein>
    <recommendedName>
        <fullName>Cytochrome b</fullName>
    </recommendedName>
    <alternativeName>
        <fullName>Complex III subunit 3</fullName>
    </alternativeName>
    <alternativeName>
        <fullName>Complex III subunit III</fullName>
    </alternativeName>
    <alternativeName>
        <fullName>Cytochrome b-c1 complex subunit 3</fullName>
    </alternativeName>
    <alternativeName>
        <fullName>Ubiquinol-cytochrome-c reductase complex cytochrome b subunit</fullName>
    </alternativeName>
</protein>
<dbReference type="EMBL" id="X54912">
    <property type="protein sequence ID" value="CAA38684.1"/>
    <property type="molecule type" value="Genomic_DNA"/>
</dbReference>
<dbReference type="EMBL" id="X60936">
    <property type="protein sequence ID" value="CAA43271.1"/>
    <property type="molecule type" value="Genomic_DNA"/>
</dbReference>
<dbReference type="EMBL" id="X54891">
    <property type="protein sequence ID" value="CAA38663.1"/>
    <property type="molecule type" value="Genomic_DNA"/>
</dbReference>
<dbReference type="EMBL" id="X54892">
    <property type="protein sequence ID" value="CAA38664.1"/>
    <property type="molecule type" value="Genomic_DNA"/>
</dbReference>
<dbReference type="EMBL" id="X54893">
    <property type="protein sequence ID" value="CAA38665.1"/>
    <property type="molecule type" value="Genomic_DNA"/>
</dbReference>
<dbReference type="EMBL" id="X54894">
    <property type="protein sequence ID" value="CAA38666.1"/>
    <property type="molecule type" value="Genomic_DNA"/>
</dbReference>
<dbReference type="EMBL" id="X54895">
    <property type="protein sequence ID" value="CAA38667.1"/>
    <property type="molecule type" value="Genomic_DNA"/>
</dbReference>
<dbReference type="EMBL" id="X54896">
    <property type="protein sequence ID" value="CAA38668.1"/>
    <property type="molecule type" value="Genomic_DNA"/>
</dbReference>
<dbReference type="EMBL" id="X54897">
    <property type="protein sequence ID" value="CAA38669.1"/>
    <property type="molecule type" value="Genomic_DNA"/>
</dbReference>
<dbReference type="EMBL" id="X54898">
    <property type="protein sequence ID" value="CAA38670.1"/>
    <property type="molecule type" value="Genomic_DNA"/>
</dbReference>
<dbReference type="EMBL" id="X54899">
    <property type="protein sequence ID" value="CAA38671.1"/>
    <property type="molecule type" value="Genomic_DNA"/>
</dbReference>
<dbReference type="EMBL" id="X54900">
    <property type="protein sequence ID" value="CAA38672.1"/>
    <property type="molecule type" value="Genomic_DNA"/>
</dbReference>
<dbReference type="EMBL" id="X54901">
    <property type="protein sequence ID" value="CAA38673.1"/>
    <property type="molecule type" value="Genomic_DNA"/>
</dbReference>
<dbReference type="EMBL" id="X54902">
    <property type="protein sequence ID" value="CAA38674.1"/>
    <property type="molecule type" value="Genomic_DNA"/>
</dbReference>
<dbReference type="EMBL" id="X54903">
    <property type="protein sequence ID" value="CAA38675.1"/>
    <property type="molecule type" value="Genomic_DNA"/>
</dbReference>
<dbReference type="EMBL" id="X54904">
    <property type="protein sequence ID" value="CAA38676.1"/>
    <property type="molecule type" value="Genomic_DNA"/>
</dbReference>
<dbReference type="EMBL" id="X54905">
    <property type="protein sequence ID" value="CAA38677.1"/>
    <property type="molecule type" value="Genomic_DNA"/>
</dbReference>
<dbReference type="EMBL" id="X54906">
    <property type="protein sequence ID" value="CAA38678.1"/>
    <property type="molecule type" value="Genomic_DNA"/>
</dbReference>
<dbReference type="EMBL" id="M25688">
    <property type="protein sequence ID" value="AAA32139.1"/>
    <property type="molecule type" value="Genomic_DNA"/>
</dbReference>
<dbReference type="PIR" id="S22931">
    <property type="entry name" value="S22931"/>
</dbReference>
<dbReference type="SMR" id="P29631"/>
<dbReference type="GO" id="GO:0005743">
    <property type="term" value="C:mitochondrial inner membrane"/>
    <property type="evidence" value="ECO:0007669"/>
    <property type="project" value="UniProtKB-SubCell"/>
</dbReference>
<dbReference type="GO" id="GO:0046872">
    <property type="term" value="F:metal ion binding"/>
    <property type="evidence" value="ECO:0007669"/>
    <property type="project" value="UniProtKB-KW"/>
</dbReference>
<dbReference type="GO" id="GO:0008121">
    <property type="term" value="F:ubiquinol-cytochrome-c reductase activity"/>
    <property type="evidence" value="ECO:0007669"/>
    <property type="project" value="TreeGrafter"/>
</dbReference>
<dbReference type="GO" id="GO:0006122">
    <property type="term" value="P:mitochondrial electron transport, ubiquinol to cytochrome c"/>
    <property type="evidence" value="ECO:0007669"/>
    <property type="project" value="TreeGrafter"/>
</dbReference>
<dbReference type="CDD" id="cd00290">
    <property type="entry name" value="cytochrome_b_C"/>
    <property type="match status" value="1"/>
</dbReference>
<dbReference type="CDD" id="cd00284">
    <property type="entry name" value="Cytochrome_b_N"/>
    <property type="match status" value="1"/>
</dbReference>
<dbReference type="Gene3D" id="1.20.810.10">
    <property type="entry name" value="Cytochrome Bc1 Complex, Chain C"/>
    <property type="match status" value="1"/>
</dbReference>
<dbReference type="InterPro" id="IPR005798">
    <property type="entry name" value="Cyt_b/b6_C"/>
</dbReference>
<dbReference type="InterPro" id="IPR036150">
    <property type="entry name" value="Cyt_b/b6_C_sf"/>
</dbReference>
<dbReference type="InterPro" id="IPR005797">
    <property type="entry name" value="Cyt_b/b6_N"/>
</dbReference>
<dbReference type="InterPro" id="IPR027387">
    <property type="entry name" value="Cytb/b6-like_sf"/>
</dbReference>
<dbReference type="InterPro" id="IPR048260">
    <property type="entry name" value="Cytochrome_b_C_euk/bac"/>
</dbReference>
<dbReference type="InterPro" id="IPR048259">
    <property type="entry name" value="Cytochrome_b_N_euk/bac"/>
</dbReference>
<dbReference type="InterPro" id="IPR016174">
    <property type="entry name" value="Di-haem_cyt_TM"/>
</dbReference>
<dbReference type="PANTHER" id="PTHR19271">
    <property type="entry name" value="CYTOCHROME B"/>
    <property type="match status" value="1"/>
</dbReference>
<dbReference type="PANTHER" id="PTHR19271:SF16">
    <property type="entry name" value="CYTOCHROME B"/>
    <property type="match status" value="1"/>
</dbReference>
<dbReference type="Pfam" id="PF00032">
    <property type="entry name" value="Cytochrom_B_C"/>
    <property type="match status" value="1"/>
</dbReference>
<dbReference type="Pfam" id="PF00033">
    <property type="entry name" value="Cytochrome_B"/>
    <property type="match status" value="1"/>
</dbReference>
<dbReference type="SUPFAM" id="SSF81648">
    <property type="entry name" value="a domain/subunit of cytochrome bc1 complex (Ubiquinol-cytochrome c reductase)"/>
    <property type="match status" value="1"/>
</dbReference>
<dbReference type="SUPFAM" id="SSF81342">
    <property type="entry name" value="Transmembrane di-heme cytochromes"/>
    <property type="match status" value="1"/>
</dbReference>
<dbReference type="PROSITE" id="PS51003">
    <property type="entry name" value="CYTB_CTER"/>
    <property type="match status" value="1"/>
</dbReference>
<dbReference type="PROSITE" id="PS51002">
    <property type="entry name" value="CYTB_NTER"/>
    <property type="match status" value="1"/>
</dbReference>
<gene>
    <name type="primary">MT-CYB</name>
    <name type="synonym">COB</name>
    <name type="synonym">CYTB</name>
    <name type="synonym">MTCYB</name>
</gene>
<sequence length="308" mass="34123">FGLLLGICLIVQIVTGLLLAAHYTADTSLAFASVAHMCRNVQFGWLIRNLHANGASFFFICIYLHIGRGLYYGSYLNKETWNIGVILLLTLMATAFVGYVLPWGQMSFWGATVITNLFSAIPYIGQTLVEWAWGGFSVDNPTLTRFFALHFLLPFVIAGLTLVHLTFLHETGSNNPLGIPSDCDKIPFHPYYSTKDMLGFALMLIPLITLALFSPNLLGDPENFTPANPLATPPHIKPEWYFLFAYAILRSIPNKLGGVLALAASVLVLFLIPLLHTSKARSMTFRPLSQILFWTLVANLLVLTWVGS</sequence>